<organism>
    <name type="scientific">Schizosaccharomyces pombe (strain 972 / ATCC 24843)</name>
    <name type="common">Fission yeast</name>
    <dbReference type="NCBI Taxonomy" id="284812"/>
    <lineage>
        <taxon>Eukaryota</taxon>
        <taxon>Fungi</taxon>
        <taxon>Dikarya</taxon>
        <taxon>Ascomycota</taxon>
        <taxon>Taphrinomycotina</taxon>
        <taxon>Schizosaccharomycetes</taxon>
        <taxon>Schizosaccharomycetales</taxon>
        <taxon>Schizosaccharomycetaceae</taxon>
        <taxon>Schizosaccharomyces</taxon>
    </lineage>
</organism>
<feature type="chain" id="PRO_0000114115" description="Non-structural maintenance of chromosomes element 1">
    <location>
        <begin position="1"/>
        <end position="232"/>
    </location>
</feature>
<feature type="zinc finger region" description="RING-type; atypical" evidence="2">
    <location>
        <begin position="181"/>
        <end position="222"/>
    </location>
</feature>
<accession>Q53EK2</accession>
<gene>
    <name type="primary">nse1</name>
    <name type="ORF">SPCC550.05</name>
</gene>
<name>NSE1_SCHPO</name>
<evidence type="ECO:0000250" key="1">
    <source>
        <dbReference type="UniProtKB" id="Q8WV22"/>
    </source>
</evidence>
<evidence type="ECO:0000255" key="2">
    <source>
        <dbReference type="PROSITE-ProRule" id="PRU00175"/>
    </source>
</evidence>
<evidence type="ECO:0000269" key="3">
    <source>
    </source>
</evidence>
<evidence type="ECO:0000269" key="4">
    <source>
    </source>
</evidence>
<evidence type="ECO:0000305" key="5"/>
<proteinExistence type="evidence at protein level"/>
<reference key="1">
    <citation type="journal article" date="2002" name="Nature">
        <title>The genome sequence of Schizosaccharomyces pombe.</title>
        <authorList>
            <person name="Wood V."/>
            <person name="Gwilliam R."/>
            <person name="Rajandream M.A."/>
            <person name="Lyne M.H."/>
            <person name="Lyne R."/>
            <person name="Stewart A."/>
            <person name="Sgouros J.G."/>
            <person name="Peat N."/>
            <person name="Hayles J."/>
            <person name="Baker S.G."/>
            <person name="Basham D."/>
            <person name="Bowman S."/>
            <person name="Brooks K."/>
            <person name="Brown D."/>
            <person name="Brown S."/>
            <person name="Chillingworth T."/>
            <person name="Churcher C.M."/>
            <person name="Collins M."/>
            <person name="Connor R."/>
            <person name="Cronin A."/>
            <person name="Davis P."/>
            <person name="Feltwell T."/>
            <person name="Fraser A."/>
            <person name="Gentles S."/>
            <person name="Goble A."/>
            <person name="Hamlin N."/>
            <person name="Harris D.E."/>
            <person name="Hidalgo J."/>
            <person name="Hodgson G."/>
            <person name="Holroyd S."/>
            <person name="Hornsby T."/>
            <person name="Howarth S."/>
            <person name="Huckle E.J."/>
            <person name="Hunt S."/>
            <person name="Jagels K."/>
            <person name="James K.D."/>
            <person name="Jones L."/>
            <person name="Jones M."/>
            <person name="Leather S."/>
            <person name="McDonald S."/>
            <person name="McLean J."/>
            <person name="Mooney P."/>
            <person name="Moule S."/>
            <person name="Mungall K.L."/>
            <person name="Murphy L.D."/>
            <person name="Niblett D."/>
            <person name="Odell C."/>
            <person name="Oliver K."/>
            <person name="O'Neil S."/>
            <person name="Pearson D."/>
            <person name="Quail M.A."/>
            <person name="Rabbinowitsch E."/>
            <person name="Rutherford K.M."/>
            <person name="Rutter S."/>
            <person name="Saunders D."/>
            <person name="Seeger K."/>
            <person name="Sharp S."/>
            <person name="Skelton J."/>
            <person name="Simmonds M.N."/>
            <person name="Squares R."/>
            <person name="Squares S."/>
            <person name="Stevens K."/>
            <person name="Taylor K."/>
            <person name="Taylor R.G."/>
            <person name="Tivey A."/>
            <person name="Walsh S.V."/>
            <person name="Warren T."/>
            <person name="Whitehead S."/>
            <person name="Woodward J.R."/>
            <person name="Volckaert G."/>
            <person name="Aert R."/>
            <person name="Robben J."/>
            <person name="Grymonprez B."/>
            <person name="Weltjens I."/>
            <person name="Vanstreels E."/>
            <person name="Rieger M."/>
            <person name="Schaefer M."/>
            <person name="Mueller-Auer S."/>
            <person name="Gabel C."/>
            <person name="Fuchs M."/>
            <person name="Duesterhoeft A."/>
            <person name="Fritzc C."/>
            <person name="Holzer E."/>
            <person name="Moestl D."/>
            <person name="Hilbert H."/>
            <person name="Borzym K."/>
            <person name="Langer I."/>
            <person name="Beck A."/>
            <person name="Lehrach H."/>
            <person name="Reinhardt R."/>
            <person name="Pohl T.M."/>
            <person name="Eger P."/>
            <person name="Zimmermann W."/>
            <person name="Wedler H."/>
            <person name="Wambutt R."/>
            <person name="Purnelle B."/>
            <person name="Goffeau A."/>
            <person name="Cadieu E."/>
            <person name="Dreano S."/>
            <person name="Gloux S."/>
            <person name="Lelaure V."/>
            <person name="Mottier S."/>
            <person name="Galibert F."/>
            <person name="Aves S.J."/>
            <person name="Xiang Z."/>
            <person name="Hunt C."/>
            <person name="Moore K."/>
            <person name="Hurst S.M."/>
            <person name="Lucas M."/>
            <person name="Rochet M."/>
            <person name="Gaillardin C."/>
            <person name="Tallada V.A."/>
            <person name="Garzon A."/>
            <person name="Thode G."/>
            <person name="Daga R.R."/>
            <person name="Cruzado L."/>
            <person name="Jimenez J."/>
            <person name="Sanchez M."/>
            <person name="del Rey F."/>
            <person name="Benito J."/>
            <person name="Dominguez A."/>
            <person name="Revuelta J.L."/>
            <person name="Moreno S."/>
            <person name="Armstrong J."/>
            <person name="Forsburg S.L."/>
            <person name="Cerutti L."/>
            <person name="Lowe T."/>
            <person name="McCombie W.R."/>
            <person name="Paulsen I."/>
            <person name="Potashkin J."/>
            <person name="Shpakovski G.V."/>
            <person name="Ussery D."/>
            <person name="Barrell B.G."/>
            <person name="Nurse P."/>
        </authorList>
    </citation>
    <scope>NUCLEOTIDE SEQUENCE [LARGE SCALE GENOMIC DNA]</scope>
    <source>
        <strain>972 / ATCC 24843</strain>
    </source>
</reference>
<reference key="2">
    <citation type="journal article" date="2003" name="J. Biol. Chem.">
        <title>Novel essential DNA repair proteins Nse1 and Nse2 are subunits of the fission yeast Smc5-Smc6 complex.</title>
        <authorList>
            <person name="McDonald W.H."/>
            <person name="Pavlova Y."/>
            <person name="Yates J.R. III"/>
            <person name="Boddy M.N."/>
        </authorList>
    </citation>
    <scope>PROTEIN SEQUENCE OF 17-21; 34-104; 112-148; 156-188 AND 210-232</scope>
    <scope>FUNCTION</scope>
    <scope>INTERACTION WITH SMC5 AND SMC6</scope>
    <scope>SUBCELLULAR LOCATION</scope>
</reference>
<reference key="3">
    <citation type="journal article" date="2004" name="Mol. Biol. Cell">
        <title>Nse1, Nse2, and a novel subunit of the Smc5-Smc6 complex, Nse3, play a crucial role in meiosis.</title>
        <authorList>
            <person name="Pebernard S."/>
            <person name="McDonald W.H."/>
            <person name="Pavlova Y."/>
            <person name="Yates J.R. III"/>
            <person name="Boddy M.N."/>
        </authorList>
    </citation>
    <scope>PARTIAL PROTEIN SEQUENCE</scope>
</reference>
<reference key="4">
    <citation type="journal article" date="2006" name="Mol. Cell. Biol.">
        <title>The Nse5-Nse6 dimer mediates DNA repair roles of the Smc5-Smc6 complex.</title>
        <authorList>
            <person name="Pebernard S."/>
            <person name="Wohlschlegel J."/>
            <person name="McDonald W.H."/>
            <person name="Yates J.R. III"/>
            <person name="Boddy M.N."/>
        </authorList>
    </citation>
    <scope>PARTIAL PROTEIN SEQUENCE</scope>
    <scope>IDENTIFICATION BY MASS SPECTROMETRY</scope>
</reference>
<reference key="5">
    <citation type="journal article" date="2005" name="Mol. Cell. Biol.">
        <title>Composition and architecture of the Schizosaccharomyces pombe Rad18 (Smc5-6) complex.</title>
        <authorList>
            <person name="Sergeant J."/>
            <person name="Taylor E."/>
            <person name="Palecek J."/>
            <person name="Fousteri M."/>
            <person name="Andrews E.A."/>
            <person name="Sweeney S."/>
            <person name="Shinagawa H."/>
            <person name="Watts F.Z."/>
            <person name="Lehmann A.R."/>
        </authorList>
    </citation>
    <scope>INTERACTION WITH NSE3</scope>
</reference>
<reference key="6">
    <citation type="journal article" date="2006" name="Nat. Biotechnol.">
        <title>ORFeome cloning and global analysis of protein localization in the fission yeast Schizosaccharomyces pombe.</title>
        <authorList>
            <person name="Matsuyama A."/>
            <person name="Arai R."/>
            <person name="Yashiroda Y."/>
            <person name="Shirai A."/>
            <person name="Kamata A."/>
            <person name="Sekido S."/>
            <person name="Kobayashi Y."/>
            <person name="Hashimoto A."/>
            <person name="Hamamoto M."/>
            <person name="Hiraoka Y."/>
            <person name="Horinouchi S."/>
            <person name="Yoshida M."/>
        </authorList>
    </citation>
    <scope>SUBCELLULAR LOCATION [LARGE SCALE ANALYSIS]</scope>
</reference>
<keyword id="KW-0903">Direct protein sequencing</keyword>
<keyword id="KW-0227">DNA damage</keyword>
<keyword id="KW-0233">DNA recombination</keyword>
<keyword id="KW-0234">DNA repair</keyword>
<keyword id="KW-0469">Meiosis</keyword>
<keyword id="KW-0479">Metal-binding</keyword>
<keyword id="KW-0539">Nucleus</keyword>
<keyword id="KW-1185">Reference proteome</keyword>
<keyword id="KW-0808">Transferase</keyword>
<keyword id="KW-0833">Ubl conjugation pathway</keyword>
<keyword id="KW-0862">Zinc</keyword>
<keyword id="KW-0863">Zinc-finger</keyword>
<protein>
    <recommendedName>
        <fullName>Non-structural maintenance of chromosomes element 1</fullName>
        <shortName>Non-SMC element 1</shortName>
        <ecNumber evidence="1">2.3.2.27</ecNumber>
    </recommendedName>
</protein>
<sequence>MEKERQDGLSDKHKFILQYIMCRTAGVDNEQVRELVQEQYGETATVEDVINELNNSLHNFDFKIKRVQDQLDGRLTLHFQNLSGDPVSQMATPYPPVQIELMRKIIEWIMKCDDYQYSLTTLQIQKLSRKEMGLAPSVIESHLHTFERDGWLRQREGIWTFTNHALAELDAYLHNEYESNLYECNACREIVIAGYVCDCGYCLHVYCCKHLAHVNCINCNTPWANATVIGRW</sequence>
<comment type="function">
    <text evidence="3">Acts in a DNA repair pathway for removal of UV-induced DNA damage that is distinct from classical nucleotide excision repair and in repair of ionizing radiation damage. Functions in homologous recombination repair of DNA double strand breaks and in recovery of stalled replication forks. Plays a critical role in meiosis.</text>
</comment>
<comment type="catalytic activity">
    <reaction evidence="1">
        <text>S-ubiquitinyl-[E2 ubiquitin-conjugating enzyme]-L-cysteine + [acceptor protein]-L-lysine = [E2 ubiquitin-conjugating enzyme]-L-cysteine + N(6)-ubiquitinyl-[acceptor protein]-L-lysine.</text>
        <dbReference type="EC" id="2.3.2.27"/>
    </reaction>
</comment>
<comment type="subunit">
    <text>Two subcomplexes smc5-smc6-nse2 and nse1-nse3-nse4 exist. These subcomplexes are then brought together via a number of interactions, forming the Smc5-Smc6 complex.</text>
</comment>
<comment type="interaction">
    <interactant intactId="EBI-605440">
        <id>Q53EK2</id>
    </interactant>
    <interactant intactId="EBI-605466">
        <id>Q9Y7U4</id>
        <label>nse3</label>
    </interactant>
    <organismsDiffer>false</organismsDiffer>
    <experiments>9</experiments>
</comment>
<comment type="interaction">
    <interactant intactId="EBI-605440">
        <id>Q53EK2</id>
    </interactant>
    <interactant intactId="EBI-605484">
        <id>Q6BDR8</id>
        <label>nse4</label>
    </interactant>
    <organismsDiffer>false</organismsDiffer>
    <experiments>5</experiments>
</comment>
<comment type="interaction">
    <interactant intactId="EBI-605440">
        <id>Q53EK2</id>
    </interactant>
    <interactant intactId="EBI-1150368">
        <id>O13688</id>
        <label>nse6</label>
    </interactant>
    <organismsDiffer>false</organismsDiffer>
    <experiments>2</experiments>
</comment>
<comment type="interaction">
    <interactant intactId="EBI-605440">
        <id>Q53EK2</id>
    </interactant>
    <interactant intactId="EBI-603756">
        <id>O13710</id>
        <label>smc5</label>
    </interactant>
    <organismsDiffer>false</organismsDiffer>
    <experiments>6</experiments>
</comment>
<comment type="interaction">
    <interactant intactId="EBI-605440">
        <id>Q53EK2</id>
    </interactant>
    <interactant intactId="EBI-603745">
        <id>P53692</id>
        <label>smc6</label>
    </interactant>
    <organismsDiffer>false</organismsDiffer>
    <experiments>4</experiments>
</comment>
<comment type="subcellular location">
    <subcellularLocation>
        <location evidence="3 4">Nucleus</location>
    </subcellularLocation>
</comment>
<comment type="similarity">
    <text evidence="5">Belongs to the NSE1 family.</text>
</comment>
<dbReference type="EC" id="2.3.2.27" evidence="1"/>
<dbReference type="EMBL" id="CU329672">
    <property type="protein sequence ID" value="CAI84978.1"/>
    <property type="molecule type" value="Genomic_DNA"/>
</dbReference>
<dbReference type="RefSeq" id="XP_001713165.1">
    <property type="nucleotide sequence ID" value="XM_001713113.2"/>
</dbReference>
<dbReference type="SMR" id="Q53EK2"/>
<dbReference type="BioGRID" id="276111">
    <property type="interactions" value="19"/>
</dbReference>
<dbReference type="ComplexPortal" id="CPX-25736">
    <property type="entry name" value="SMC5-SMC6 SUMO ligase complex"/>
</dbReference>
<dbReference type="FunCoup" id="Q53EK2">
    <property type="interactions" value="135"/>
</dbReference>
<dbReference type="IntAct" id="Q53EK2">
    <property type="interactions" value="6"/>
</dbReference>
<dbReference type="STRING" id="284812.Q53EK2"/>
<dbReference type="PaxDb" id="4896-SPCC550.05.1"/>
<dbReference type="EnsemblFungi" id="SPCC550.05.1">
    <property type="protein sequence ID" value="SPCC550.05.1:pep"/>
    <property type="gene ID" value="SPCC550.05"/>
</dbReference>
<dbReference type="PomBase" id="SPCC550.05">
    <property type="gene designation" value="nse1"/>
</dbReference>
<dbReference type="VEuPathDB" id="FungiDB:SPCC550.05"/>
<dbReference type="eggNOG" id="KOG4718">
    <property type="taxonomic scope" value="Eukaryota"/>
</dbReference>
<dbReference type="HOGENOM" id="CLU_1185613_0_0_1"/>
<dbReference type="InParanoid" id="Q53EK2"/>
<dbReference type="OMA" id="ACINHSC"/>
<dbReference type="PhylomeDB" id="Q53EK2"/>
<dbReference type="Reactome" id="R-SPO-3108214">
    <property type="pathway name" value="SUMOylation of DNA damage response and repair proteins"/>
</dbReference>
<dbReference type="PRO" id="PR:Q53EK2"/>
<dbReference type="Proteomes" id="UP000002485">
    <property type="component" value="Chromosome III"/>
</dbReference>
<dbReference type="GO" id="GO:0005634">
    <property type="term" value="C:nucleus"/>
    <property type="evidence" value="ECO:0000314"/>
    <property type="project" value="PomBase"/>
</dbReference>
<dbReference type="GO" id="GO:0030915">
    <property type="term" value="C:Smc5-Smc6 complex"/>
    <property type="evidence" value="ECO:0000314"/>
    <property type="project" value="PomBase"/>
</dbReference>
<dbReference type="GO" id="GO:0061630">
    <property type="term" value="F:ubiquitin protein ligase activity"/>
    <property type="evidence" value="ECO:0000314"/>
    <property type="project" value="PomBase"/>
</dbReference>
<dbReference type="GO" id="GO:0004842">
    <property type="term" value="F:ubiquitin-protein transferase activity"/>
    <property type="evidence" value="ECO:0000318"/>
    <property type="project" value="GO_Central"/>
</dbReference>
<dbReference type="GO" id="GO:0008270">
    <property type="term" value="F:zinc ion binding"/>
    <property type="evidence" value="ECO:0007669"/>
    <property type="project" value="UniProtKB-KW"/>
</dbReference>
<dbReference type="GO" id="GO:0006281">
    <property type="term" value="P:DNA repair"/>
    <property type="evidence" value="ECO:0000315"/>
    <property type="project" value="PomBase"/>
</dbReference>
<dbReference type="GO" id="GO:0000724">
    <property type="term" value="P:double-strand break repair via homologous recombination"/>
    <property type="evidence" value="ECO:0000315"/>
    <property type="project" value="PomBase"/>
</dbReference>
<dbReference type="GO" id="GO:0007127">
    <property type="term" value="P:meiosis I"/>
    <property type="evidence" value="ECO:0000315"/>
    <property type="project" value="PomBase"/>
</dbReference>
<dbReference type="CDD" id="cd16493">
    <property type="entry name" value="RING-CH-C4HC3_NSE1"/>
    <property type="match status" value="1"/>
</dbReference>
<dbReference type="FunFam" id="1.10.10.10:FF:000270">
    <property type="entry name" value="Non-structural maintenance of chromosomes element 1 homolog"/>
    <property type="match status" value="1"/>
</dbReference>
<dbReference type="Gene3D" id="3.90.1150.220">
    <property type="match status" value="1"/>
</dbReference>
<dbReference type="Gene3D" id="1.10.10.10">
    <property type="entry name" value="Winged helix-like DNA-binding domain superfamily/Winged helix DNA-binding domain"/>
    <property type="match status" value="1"/>
</dbReference>
<dbReference type="InterPro" id="IPR011513">
    <property type="entry name" value="Nse1"/>
</dbReference>
<dbReference type="InterPro" id="IPR014857">
    <property type="entry name" value="Nse1_RING_C4HC3-type"/>
</dbReference>
<dbReference type="InterPro" id="IPR036388">
    <property type="entry name" value="WH-like_DNA-bd_sf"/>
</dbReference>
<dbReference type="PANTHER" id="PTHR20973">
    <property type="entry name" value="NON-SMC ELEMENT 1-RELATED"/>
    <property type="match status" value="1"/>
</dbReference>
<dbReference type="PANTHER" id="PTHR20973:SF0">
    <property type="entry name" value="NON-STRUCTURAL MAINTENANCE OF CHROMOSOMES ELEMENT 1 HOMOLOG"/>
    <property type="match status" value="1"/>
</dbReference>
<dbReference type="Pfam" id="PF07574">
    <property type="entry name" value="SMC_Nse1"/>
    <property type="match status" value="1"/>
</dbReference>